<dbReference type="EC" id="2.1.2.11" evidence="1"/>
<dbReference type="EMBL" id="CP000438">
    <property type="protein sequence ID" value="ABJ10779.1"/>
    <property type="molecule type" value="Genomic_DNA"/>
</dbReference>
<dbReference type="SMR" id="Q02K83"/>
<dbReference type="KEGG" id="pau:PA14_43830"/>
<dbReference type="PseudoCAP" id="PA14_43830"/>
<dbReference type="HOGENOM" id="CLU_036645_1_0_6"/>
<dbReference type="BioCyc" id="PAER208963:G1G74-3676-MONOMER"/>
<dbReference type="UniPathway" id="UPA00028">
    <property type="reaction ID" value="UER00003"/>
</dbReference>
<dbReference type="Proteomes" id="UP000000653">
    <property type="component" value="Chromosome"/>
</dbReference>
<dbReference type="GO" id="GO:0005737">
    <property type="term" value="C:cytoplasm"/>
    <property type="evidence" value="ECO:0007669"/>
    <property type="project" value="UniProtKB-SubCell"/>
</dbReference>
<dbReference type="GO" id="GO:0003864">
    <property type="term" value="F:3-methyl-2-oxobutanoate hydroxymethyltransferase activity"/>
    <property type="evidence" value="ECO:0007669"/>
    <property type="project" value="UniProtKB-UniRule"/>
</dbReference>
<dbReference type="GO" id="GO:0000287">
    <property type="term" value="F:magnesium ion binding"/>
    <property type="evidence" value="ECO:0007669"/>
    <property type="project" value="TreeGrafter"/>
</dbReference>
<dbReference type="GO" id="GO:0015940">
    <property type="term" value="P:pantothenate biosynthetic process"/>
    <property type="evidence" value="ECO:0007669"/>
    <property type="project" value="UniProtKB-UniRule"/>
</dbReference>
<dbReference type="CDD" id="cd06557">
    <property type="entry name" value="KPHMT-like"/>
    <property type="match status" value="1"/>
</dbReference>
<dbReference type="FunFam" id="3.20.20.60:FF:000003">
    <property type="entry name" value="3-methyl-2-oxobutanoate hydroxymethyltransferase"/>
    <property type="match status" value="1"/>
</dbReference>
<dbReference type="Gene3D" id="3.20.20.60">
    <property type="entry name" value="Phosphoenolpyruvate-binding domains"/>
    <property type="match status" value="1"/>
</dbReference>
<dbReference type="HAMAP" id="MF_00156">
    <property type="entry name" value="PanB"/>
    <property type="match status" value="1"/>
</dbReference>
<dbReference type="InterPro" id="IPR003700">
    <property type="entry name" value="Pantoate_hydroxy_MeTrfase"/>
</dbReference>
<dbReference type="InterPro" id="IPR015813">
    <property type="entry name" value="Pyrv/PenolPyrv_kinase-like_dom"/>
</dbReference>
<dbReference type="InterPro" id="IPR040442">
    <property type="entry name" value="Pyrv_kinase-like_dom_sf"/>
</dbReference>
<dbReference type="NCBIfam" id="TIGR00222">
    <property type="entry name" value="panB"/>
    <property type="match status" value="1"/>
</dbReference>
<dbReference type="NCBIfam" id="NF001452">
    <property type="entry name" value="PRK00311.1"/>
    <property type="match status" value="1"/>
</dbReference>
<dbReference type="PANTHER" id="PTHR20881">
    <property type="entry name" value="3-METHYL-2-OXOBUTANOATE HYDROXYMETHYLTRANSFERASE"/>
    <property type="match status" value="1"/>
</dbReference>
<dbReference type="PANTHER" id="PTHR20881:SF0">
    <property type="entry name" value="3-METHYL-2-OXOBUTANOATE HYDROXYMETHYLTRANSFERASE"/>
    <property type="match status" value="1"/>
</dbReference>
<dbReference type="Pfam" id="PF02548">
    <property type="entry name" value="Pantoate_transf"/>
    <property type="match status" value="1"/>
</dbReference>
<dbReference type="PIRSF" id="PIRSF000388">
    <property type="entry name" value="Pantoate_hydroxy_MeTrfase"/>
    <property type="match status" value="1"/>
</dbReference>
<dbReference type="SUPFAM" id="SSF51621">
    <property type="entry name" value="Phosphoenolpyruvate/pyruvate domain"/>
    <property type="match status" value="1"/>
</dbReference>
<feature type="chain" id="PRO_0000297333" description="3-methyl-2-oxobutanoate hydroxymethyltransferase 1">
    <location>
        <begin position="1"/>
        <end position="273"/>
    </location>
</feature>
<feature type="active site" description="Proton acceptor" evidence="1">
    <location>
        <position position="187"/>
    </location>
</feature>
<feature type="binding site" evidence="1">
    <location>
        <begin position="49"/>
        <end position="50"/>
    </location>
    <ligand>
        <name>3-methyl-2-oxobutanoate</name>
        <dbReference type="ChEBI" id="CHEBI:11851"/>
    </ligand>
</feature>
<feature type="binding site" evidence="1">
    <location>
        <position position="49"/>
    </location>
    <ligand>
        <name>Mg(2+)</name>
        <dbReference type="ChEBI" id="CHEBI:18420"/>
    </ligand>
</feature>
<feature type="binding site" evidence="1">
    <location>
        <position position="88"/>
    </location>
    <ligand>
        <name>3-methyl-2-oxobutanoate</name>
        <dbReference type="ChEBI" id="CHEBI:11851"/>
    </ligand>
</feature>
<feature type="binding site" evidence="1">
    <location>
        <position position="88"/>
    </location>
    <ligand>
        <name>Mg(2+)</name>
        <dbReference type="ChEBI" id="CHEBI:18420"/>
    </ligand>
</feature>
<feature type="binding site" evidence="1">
    <location>
        <position position="118"/>
    </location>
    <ligand>
        <name>3-methyl-2-oxobutanoate</name>
        <dbReference type="ChEBI" id="CHEBI:11851"/>
    </ligand>
</feature>
<feature type="binding site" evidence="1">
    <location>
        <position position="120"/>
    </location>
    <ligand>
        <name>Mg(2+)</name>
        <dbReference type="ChEBI" id="CHEBI:18420"/>
    </ligand>
</feature>
<name>PANB1_PSEAB</name>
<protein>
    <recommendedName>
        <fullName evidence="1">3-methyl-2-oxobutanoate hydroxymethyltransferase 1</fullName>
        <ecNumber evidence="1">2.1.2.11</ecNumber>
    </recommendedName>
    <alternativeName>
        <fullName evidence="1">Ketopantoate hydroxymethyltransferase 1</fullName>
        <shortName evidence="1">KPHMT 1</shortName>
    </alternativeName>
</protein>
<gene>
    <name evidence="1" type="primary">panB1</name>
    <name type="ordered locus">PA14_43830</name>
</gene>
<comment type="function">
    <text evidence="1">Catalyzes the reversible reaction in which hydroxymethyl group from 5,10-methylenetetrahydrofolate is transferred onto alpha-ketoisovalerate to form ketopantoate.</text>
</comment>
<comment type="catalytic activity">
    <reaction evidence="1">
        <text>3-methyl-2-oxobutanoate + (6R)-5,10-methylene-5,6,7,8-tetrahydrofolate + H2O = 2-dehydropantoate + (6S)-5,6,7,8-tetrahydrofolate</text>
        <dbReference type="Rhea" id="RHEA:11824"/>
        <dbReference type="ChEBI" id="CHEBI:11561"/>
        <dbReference type="ChEBI" id="CHEBI:11851"/>
        <dbReference type="ChEBI" id="CHEBI:15377"/>
        <dbReference type="ChEBI" id="CHEBI:15636"/>
        <dbReference type="ChEBI" id="CHEBI:57453"/>
        <dbReference type="EC" id="2.1.2.11"/>
    </reaction>
</comment>
<comment type="cofactor">
    <cofactor evidence="1">
        <name>Mg(2+)</name>
        <dbReference type="ChEBI" id="CHEBI:18420"/>
    </cofactor>
    <text evidence="1">Binds 1 Mg(2+) ion per subunit.</text>
</comment>
<comment type="pathway">
    <text evidence="1">Cofactor biosynthesis; (R)-pantothenate biosynthesis; (R)-pantoate from 3-methyl-2-oxobutanoate: step 1/2.</text>
</comment>
<comment type="subunit">
    <text evidence="1">Homodecamer; pentamer of dimers.</text>
</comment>
<comment type="subcellular location">
    <subcellularLocation>
        <location evidence="1">Cytoplasm</location>
    </subcellularLocation>
</comment>
<comment type="similarity">
    <text evidence="1">Belongs to the PanB family.</text>
</comment>
<evidence type="ECO:0000255" key="1">
    <source>
        <dbReference type="HAMAP-Rule" id="MF_00156"/>
    </source>
</evidence>
<proteinExistence type="inferred from homology"/>
<reference key="1">
    <citation type="journal article" date="2006" name="Genome Biol.">
        <title>Genomic analysis reveals that Pseudomonas aeruginosa virulence is combinatorial.</title>
        <authorList>
            <person name="Lee D.G."/>
            <person name="Urbach J.M."/>
            <person name="Wu G."/>
            <person name="Liberati N.T."/>
            <person name="Feinbaum R.L."/>
            <person name="Miyata S."/>
            <person name="Diggins L.T."/>
            <person name="He J."/>
            <person name="Saucier M."/>
            <person name="Deziel E."/>
            <person name="Friedman L."/>
            <person name="Li L."/>
            <person name="Grills G."/>
            <person name="Montgomery K."/>
            <person name="Kucherlapati R."/>
            <person name="Rahme L.G."/>
            <person name="Ausubel F.M."/>
        </authorList>
    </citation>
    <scope>NUCLEOTIDE SEQUENCE [LARGE SCALE GENOMIC DNA]</scope>
    <source>
        <strain>UCBPP-PA14</strain>
    </source>
</reference>
<keyword id="KW-0963">Cytoplasm</keyword>
<keyword id="KW-0460">Magnesium</keyword>
<keyword id="KW-0479">Metal-binding</keyword>
<keyword id="KW-0566">Pantothenate biosynthesis</keyword>
<keyword id="KW-0808">Transferase</keyword>
<accession>Q02K83</accession>
<sequence>MSSHRPQHRLSVPDIQRRKGAGSLVALTAYSTPMARLLDPHADLLLVGDSLGMVLYGMPSTLGVSLEMMVAHTLAVMRGSRRACVVADLPFASYQESPRQAFRNAARLLADSGAQAVKLEGGEEMEETVDFLVRRGIPVLAHIGLMPQQVNAMGGFKAQGRDPESAERVRRDGLAMQRGGAFAVVIEGVGEPLARRLSEELAIPCIGIGASPACDGQVLVSEDLLGLSGEQVPRFVERYARLDREIDEAARRFAEDVRERRFPEARHCFAMRE</sequence>
<organism>
    <name type="scientific">Pseudomonas aeruginosa (strain UCBPP-PA14)</name>
    <dbReference type="NCBI Taxonomy" id="208963"/>
    <lineage>
        <taxon>Bacteria</taxon>
        <taxon>Pseudomonadati</taxon>
        <taxon>Pseudomonadota</taxon>
        <taxon>Gammaproteobacteria</taxon>
        <taxon>Pseudomonadales</taxon>
        <taxon>Pseudomonadaceae</taxon>
        <taxon>Pseudomonas</taxon>
    </lineage>
</organism>